<organism>
    <name type="scientific">Caulobacter vibrioides (strain ATCC 19089 / CIP 103742 / CB 15)</name>
    <name type="common">Caulobacter crescentus</name>
    <dbReference type="NCBI Taxonomy" id="190650"/>
    <lineage>
        <taxon>Bacteria</taxon>
        <taxon>Pseudomonadati</taxon>
        <taxon>Pseudomonadota</taxon>
        <taxon>Alphaproteobacteria</taxon>
        <taxon>Caulobacterales</taxon>
        <taxon>Caulobacteraceae</taxon>
        <taxon>Caulobacter</taxon>
    </lineage>
</organism>
<reference key="1">
    <citation type="journal article" date="2001" name="Proc. Natl. Acad. Sci. U.S.A.">
        <title>Complete genome sequence of Caulobacter crescentus.</title>
        <authorList>
            <person name="Nierman W.C."/>
            <person name="Feldblyum T.V."/>
            <person name="Laub M.T."/>
            <person name="Paulsen I.T."/>
            <person name="Nelson K.E."/>
            <person name="Eisen J.A."/>
            <person name="Heidelberg J.F."/>
            <person name="Alley M.R.K."/>
            <person name="Ohta N."/>
            <person name="Maddock J.R."/>
            <person name="Potocka I."/>
            <person name="Nelson W.C."/>
            <person name="Newton A."/>
            <person name="Stephens C."/>
            <person name="Phadke N.D."/>
            <person name="Ely B."/>
            <person name="DeBoy R.T."/>
            <person name="Dodson R.J."/>
            <person name="Durkin A.S."/>
            <person name="Gwinn M.L."/>
            <person name="Haft D.H."/>
            <person name="Kolonay J.F."/>
            <person name="Smit J."/>
            <person name="Craven M.B."/>
            <person name="Khouri H.M."/>
            <person name="Shetty J."/>
            <person name="Berry K.J."/>
            <person name="Utterback T.R."/>
            <person name="Tran K."/>
            <person name="Wolf A.M."/>
            <person name="Vamathevan J.J."/>
            <person name="Ermolaeva M.D."/>
            <person name="White O."/>
            <person name="Salzberg S.L."/>
            <person name="Venter J.C."/>
            <person name="Shapiro L."/>
            <person name="Fraser C.M."/>
        </authorList>
    </citation>
    <scope>NUCLEOTIDE SEQUENCE [LARGE SCALE GENOMIC DNA]</scope>
    <source>
        <strain>ATCC 19089 / CIP 103742 / CB 15</strain>
    </source>
</reference>
<dbReference type="EC" id="2.7.7.6" evidence="1"/>
<dbReference type="EMBL" id="AE005673">
    <property type="protein sequence ID" value="AAK22489.1"/>
    <property type="molecule type" value="Genomic_DNA"/>
</dbReference>
<dbReference type="PIR" id="E87311">
    <property type="entry name" value="E87311"/>
</dbReference>
<dbReference type="RefSeq" id="NP_419321.1">
    <property type="nucleotide sequence ID" value="NC_002696.2"/>
</dbReference>
<dbReference type="RefSeq" id="WP_010918390.1">
    <property type="nucleotide sequence ID" value="NC_002696.2"/>
</dbReference>
<dbReference type="SMR" id="Q9AAU2"/>
<dbReference type="STRING" id="190650.CC_0502"/>
<dbReference type="EnsemblBacteria" id="AAK22489">
    <property type="protein sequence ID" value="AAK22489"/>
    <property type="gene ID" value="CC_0502"/>
</dbReference>
<dbReference type="KEGG" id="ccr:CC_0502"/>
<dbReference type="PATRIC" id="fig|190650.5.peg.512"/>
<dbReference type="eggNOG" id="COG0085">
    <property type="taxonomic scope" value="Bacteria"/>
</dbReference>
<dbReference type="HOGENOM" id="CLU_000524_4_0_5"/>
<dbReference type="BioCyc" id="CAULO:CC0502-MONOMER"/>
<dbReference type="Proteomes" id="UP000001816">
    <property type="component" value="Chromosome"/>
</dbReference>
<dbReference type="GO" id="GO:0000428">
    <property type="term" value="C:DNA-directed RNA polymerase complex"/>
    <property type="evidence" value="ECO:0007669"/>
    <property type="project" value="UniProtKB-KW"/>
</dbReference>
<dbReference type="GO" id="GO:0003677">
    <property type="term" value="F:DNA binding"/>
    <property type="evidence" value="ECO:0007669"/>
    <property type="project" value="UniProtKB-UniRule"/>
</dbReference>
<dbReference type="GO" id="GO:0003899">
    <property type="term" value="F:DNA-directed RNA polymerase activity"/>
    <property type="evidence" value="ECO:0007669"/>
    <property type="project" value="UniProtKB-UniRule"/>
</dbReference>
<dbReference type="GO" id="GO:0032549">
    <property type="term" value="F:ribonucleoside binding"/>
    <property type="evidence" value="ECO:0007669"/>
    <property type="project" value="InterPro"/>
</dbReference>
<dbReference type="GO" id="GO:0006351">
    <property type="term" value="P:DNA-templated transcription"/>
    <property type="evidence" value="ECO:0007669"/>
    <property type="project" value="UniProtKB-UniRule"/>
</dbReference>
<dbReference type="CDD" id="cd00653">
    <property type="entry name" value="RNA_pol_B_RPB2"/>
    <property type="match status" value="1"/>
</dbReference>
<dbReference type="FunFam" id="3.90.1800.10:FF:000001">
    <property type="entry name" value="DNA-directed RNA polymerase subunit beta"/>
    <property type="match status" value="1"/>
</dbReference>
<dbReference type="Gene3D" id="2.40.50.100">
    <property type="match status" value="1"/>
</dbReference>
<dbReference type="Gene3D" id="2.40.50.150">
    <property type="match status" value="1"/>
</dbReference>
<dbReference type="Gene3D" id="3.90.1100.10">
    <property type="match status" value="2"/>
</dbReference>
<dbReference type="Gene3D" id="2.30.150.10">
    <property type="entry name" value="DNA-directed RNA polymerase, beta subunit, external 1 domain"/>
    <property type="match status" value="1"/>
</dbReference>
<dbReference type="Gene3D" id="2.40.270.10">
    <property type="entry name" value="DNA-directed RNA polymerase, subunit 2, domain 6"/>
    <property type="match status" value="1"/>
</dbReference>
<dbReference type="Gene3D" id="3.90.1800.10">
    <property type="entry name" value="RNA polymerase alpha subunit dimerisation domain"/>
    <property type="match status" value="1"/>
</dbReference>
<dbReference type="Gene3D" id="3.90.1110.10">
    <property type="entry name" value="RNA polymerase Rpb2, domain 2"/>
    <property type="match status" value="1"/>
</dbReference>
<dbReference type="HAMAP" id="MF_01321">
    <property type="entry name" value="RNApol_bact_RpoB"/>
    <property type="match status" value="1"/>
</dbReference>
<dbReference type="InterPro" id="IPR042107">
    <property type="entry name" value="DNA-dir_RNA_pol_bsu_ext_1_sf"/>
</dbReference>
<dbReference type="InterPro" id="IPR019462">
    <property type="entry name" value="DNA-dir_RNA_pol_bsu_external_1"/>
</dbReference>
<dbReference type="InterPro" id="IPR015712">
    <property type="entry name" value="DNA-dir_RNA_pol_su2"/>
</dbReference>
<dbReference type="InterPro" id="IPR007120">
    <property type="entry name" value="DNA-dir_RNAP_su2_dom"/>
</dbReference>
<dbReference type="InterPro" id="IPR037033">
    <property type="entry name" value="DNA-dir_RNAP_su2_hyb_sf"/>
</dbReference>
<dbReference type="InterPro" id="IPR010243">
    <property type="entry name" value="RNA_pol_bsu_bac"/>
</dbReference>
<dbReference type="InterPro" id="IPR007121">
    <property type="entry name" value="RNA_pol_bsu_CS"/>
</dbReference>
<dbReference type="InterPro" id="IPR007644">
    <property type="entry name" value="RNA_pol_bsu_protrusion"/>
</dbReference>
<dbReference type="InterPro" id="IPR007642">
    <property type="entry name" value="RNA_pol_Rpb2_2"/>
</dbReference>
<dbReference type="InterPro" id="IPR037034">
    <property type="entry name" value="RNA_pol_Rpb2_2_sf"/>
</dbReference>
<dbReference type="InterPro" id="IPR007645">
    <property type="entry name" value="RNA_pol_Rpb2_3"/>
</dbReference>
<dbReference type="InterPro" id="IPR007641">
    <property type="entry name" value="RNA_pol_Rpb2_7"/>
</dbReference>
<dbReference type="InterPro" id="IPR014724">
    <property type="entry name" value="RNA_pol_RPB2_OB-fold"/>
</dbReference>
<dbReference type="NCBIfam" id="NF001616">
    <property type="entry name" value="PRK00405.1"/>
    <property type="match status" value="1"/>
</dbReference>
<dbReference type="NCBIfam" id="TIGR02013">
    <property type="entry name" value="rpoB"/>
    <property type="match status" value="1"/>
</dbReference>
<dbReference type="PANTHER" id="PTHR20856">
    <property type="entry name" value="DNA-DIRECTED RNA POLYMERASE I SUBUNIT 2"/>
    <property type="match status" value="1"/>
</dbReference>
<dbReference type="Pfam" id="PF04563">
    <property type="entry name" value="RNA_pol_Rpb2_1"/>
    <property type="match status" value="1"/>
</dbReference>
<dbReference type="Pfam" id="PF04561">
    <property type="entry name" value="RNA_pol_Rpb2_2"/>
    <property type="match status" value="2"/>
</dbReference>
<dbReference type="Pfam" id="PF04565">
    <property type="entry name" value="RNA_pol_Rpb2_3"/>
    <property type="match status" value="1"/>
</dbReference>
<dbReference type="Pfam" id="PF10385">
    <property type="entry name" value="RNA_pol_Rpb2_45"/>
    <property type="match status" value="1"/>
</dbReference>
<dbReference type="Pfam" id="PF00562">
    <property type="entry name" value="RNA_pol_Rpb2_6"/>
    <property type="match status" value="1"/>
</dbReference>
<dbReference type="Pfam" id="PF04560">
    <property type="entry name" value="RNA_pol_Rpb2_7"/>
    <property type="match status" value="1"/>
</dbReference>
<dbReference type="SUPFAM" id="SSF64484">
    <property type="entry name" value="beta and beta-prime subunits of DNA dependent RNA-polymerase"/>
    <property type="match status" value="1"/>
</dbReference>
<dbReference type="PROSITE" id="PS01166">
    <property type="entry name" value="RNA_POL_BETA"/>
    <property type="match status" value="1"/>
</dbReference>
<proteinExistence type="inferred from homology"/>
<keyword id="KW-0240">DNA-directed RNA polymerase</keyword>
<keyword id="KW-0548">Nucleotidyltransferase</keyword>
<keyword id="KW-1185">Reference proteome</keyword>
<keyword id="KW-0804">Transcription</keyword>
<keyword id="KW-0808">Transferase</keyword>
<protein>
    <recommendedName>
        <fullName evidence="1">DNA-directed RNA polymerase subunit beta</fullName>
        <shortName evidence="1">RNAP subunit beta</shortName>
        <ecNumber evidence="1">2.7.7.6</ecNumber>
    </recommendedName>
    <alternativeName>
        <fullName evidence="1">RNA polymerase subunit beta</fullName>
    </alternativeName>
    <alternativeName>
        <fullName evidence="1">Transcriptase subunit beta</fullName>
    </alternativeName>
</protein>
<comment type="function">
    <text evidence="1">DNA-dependent RNA polymerase catalyzes the transcription of DNA into RNA using the four ribonucleoside triphosphates as substrates.</text>
</comment>
<comment type="catalytic activity">
    <reaction evidence="1">
        <text>RNA(n) + a ribonucleoside 5'-triphosphate = RNA(n+1) + diphosphate</text>
        <dbReference type="Rhea" id="RHEA:21248"/>
        <dbReference type="Rhea" id="RHEA-COMP:14527"/>
        <dbReference type="Rhea" id="RHEA-COMP:17342"/>
        <dbReference type="ChEBI" id="CHEBI:33019"/>
        <dbReference type="ChEBI" id="CHEBI:61557"/>
        <dbReference type="ChEBI" id="CHEBI:140395"/>
        <dbReference type="EC" id="2.7.7.6"/>
    </reaction>
</comment>
<comment type="subunit">
    <text evidence="1">The RNAP catalytic core consists of 2 alpha, 1 beta, 1 beta' and 1 omega subunit. When a sigma factor is associated with the core the holoenzyme is formed, which can initiate transcription.</text>
</comment>
<comment type="similarity">
    <text evidence="1">Belongs to the RNA polymerase beta chain family.</text>
</comment>
<feature type="chain" id="PRO_0000047877" description="DNA-directed RNA polymerase subunit beta">
    <location>
        <begin position="1"/>
        <end position="1356"/>
    </location>
</feature>
<evidence type="ECO:0000255" key="1">
    <source>
        <dbReference type="HAMAP-Rule" id="MF_01321"/>
    </source>
</evidence>
<accession>Q9AAU2</accession>
<sequence length="1356" mass="150890">MAQSFTGKKRIRKSFGRIPEAVQMPNLIEVQRSSYEQFLQRETRPGLRRDEGVEAVFKSVFPIKDFNERAVLEYVSYEFEEPKYDVEECIQRDMTFAAPLKVKLRLIVFETEEETGARSVKDIKEQDVYMGDIPLMTDKGTFIVNGTERVIVSQMHRSPGVFFDHDKGKTHASGKLLFAARVIPYRGSWLDFEFDAKDIVYVRIDRRRKLPATTFLYALGMDGEEILTTFYDVVPFEKRSGGWATPYKPERWRGVKPEFPLVDADTGEEVAPAGTKITARQAKKFADGGLKTLLLAPEALTGRYLARDAVNMATGEIYAEAGDELDVTSIQALADQGFSTIDVLDIDHVTVGAYMRNTLRVDKNAIREDALFDIYRVMRPGEPPTVEAAEAMFKSLFFDAERYDLSSVGRVKMNMRLEQDVSDEVRILRKEDVLAVLKVLVGLRDGRGEIDDIDNLGNRRVRSVGELLENQYRVGLLRMERAIKERMSSVDIDTVMPHDLINAKPAAAAVREFFGSSQLSQFMDQTNPLSEITHKRRLSALGPGGLTRERAGFEVRDVHPTHYGRICPIETPEGPNIGLINSLATHARVNKYGFIESPYRRVKDGKPQDEVVYMSAMEESKHVIAQSNIKVAEGEIVEDLVPGRINGEPTLLQKETVDLMDVSPRQVVSVAAALIPFLENDDANRALMGSNMQRQAVPLVQSDAPLVGTGMEAVVARDSGAVVIAKRTGVVEQIDGTRIVIRATEETDPARSGVDIYRMSKFQRSNQSTCINQRPLVKVGDRIVAGDIIADGPSTELGELALGRNALVAFMPWNGYNFEDSILISERIVRDDVFTSIHIEEFEVMARDTKLGPEEITRDIPNVGEEALRNLDEAGIVAIGAEVQPGDILVGKVTPKGESPMTPEEKLLRAIFGEKASDVRDTSLRLPPGVAGTIVDVRVFNRHGVDKDERALAIERAEIDRLGKDRDDEFAILNRNISGRLKELLIGKVALSGPKGLSRGEITAEGLAQVASGLWWQIALEDEKAMGELESLRRLFDENRKRLDRRFEDKVDKLQRGDELPPGVMKMVKVFVAVKRKLQPGDKMAGRHGNKGVISRILPIEDMPFLADGTHVDVVLNPLGVPSRMNVGQIFETHLGWACANLGKQITNLLEDWQQGGQKQALVERLTEIYGPDEELPDTEEGLVELARNLGKGVPIATPVFDGARMDDIEGHLEMAGVNKSGQSILFDGLTGEQFKRPVTVGYIYMLKLHHLVDDKIHARSIGPYSLVTQQPLGGKAQFGGQRFGEMEVWALEAYGAAYTLQEMLTVKSDDVAGRTKVYESIVRGDDTFEAGIPESFNVLVKEMRSLGLNVELENS</sequence>
<name>RPOB_CAUVC</name>
<gene>
    <name evidence="1" type="primary">rpoB</name>
    <name type="ordered locus">CC_0502</name>
</gene>